<organism>
    <name type="scientific">Carboxydothermus hydrogenoformans (strain ATCC BAA-161 / DSM 6008 / Z-2901)</name>
    <dbReference type="NCBI Taxonomy" id="246194"/>
    <lineage>
        <taxon>Bacteria</taxon>
        <taxon>Bacillati</taxon>
        <taxon>Bacillota</taxon>
        <taxon>Clostridia</taxon>
        <taxon>Thermoanaerobacterales</taxon>
        <taxon>Thermoanaerobacteraceae</taxon>
        <taxon>Carboxydothermus</taxon>
    </lineage>
</organism>
<name>NUOB_CARHZ</name>
<dbReference type="EC" id="7.1.1.-" evidence="1"/>
<dbReference type="EMBL" id="CP000141">
    <property type="protein sequence ID" value="ABB14972.1"/>
    <property type="molecule type" value="Genomic_DNA"/>
</dbReference>
<dbReference type="RefSeq" id="WP_011344331.1">
    <property type="nucleotide sequence ID" value="NC_007503.1"/>
</dbReference>
<dbReference type="SMR" id="Q3AC78"/>
<dbReference type="STRING" id="246194.CHY_1424"/>
<dbReference type="KEGG" id="chy:CHY_1424"/>
<dbReference type="eggNOG" id="COG0377">
    <property type="taxonomic scope" value="Bacteria"/>
</dbReference>
<dbReference type="HOGENOM" id="CLU_055737_7_3_9"/>
<dbReference type="InParanoid" id="Q3AC78"/>
<dbReference type="OrthoDB" id="9786737at2"/>
<dbReference type="Proteomes" id="UP000002706">
    <property type="component" value="Chromosome"/>
</dbReference>
<dbReference type="GO" id="GO:0005886">
    <property type="term" value="C:plasma membrane"/>
    <property type="evidence" value="ECO:0007669"/>
    <property type="project" value="UniProtKB-SubCell"/>
</dbReference>
<dbReference type="GO" id="GO:0045271">
    <property type="term" value="C:respiratory chain complex I"/>
    <property type="evidence" value="ECO:0007669"/>
    <property type="project" value="TreeGrafter"/>
</dbReference>
<dbReference type="GO" id="GO:0051539">
    <property type="term" value="F:4 iron, 4 sulfur cluster binding"/>
    <property type="evidence" value="ECO:0007669"/>
    <property type="project" value="UniProtKB-KW"/>
</dbReference>
<dbReference type="GO" id="GO:0005506">
    <property type="term" value="F:iron ion binding"/>
    <property type="evidence" value="ECO:0007669"/>
    <property type="project" value="UniProtKB-UniRule"/>
</dbReference>
<dbReference type="GO" id="GO:0008137">
    <property type="term" value="F:NADH dehydrogenase (ubiquinone) activity"/>
    <property type="evidence" value="ECO:0007669"/>
    <property type="project" value="InterPro"/>
</dbReference>
<dbReference type="GO" id="GO:0050136">
    <property type="term" value="F:NADH:ubiquinone reductase (non-electrogenic) activity"/>
    <property type="evidence" value="ECO:0007669"/>
    <property type="project" value="UniProtKB-UniRule"/>
</dbReference>
<dbReference type="GO" id="GO:0048038">
    <property type="term" value="F:quinone binding"/>
    <property type="evidence" value="ECO:0007669"/>
    <property type="project" value="UniProtKB-KW"/>
</dbReference>
<dbReference type="GO" id="GO:0009060">
    <property type="term" value="P:aerobic respiration"/>
    <property type="evidence" value="ECO:0007669"/>
    <property type="project" value="TreeGrafter"/>
</dbReference>
<dbReference type="GO" id="GO:0015990">
    <property type="term" value="P:electron transport coupled proton transport"/>
    <property type="evidence" value="ECO:0007669"/>
    <property type="project" value="TreeGrafter"/>
</dbReference>
<dbReference type="FunFam" id="3.40.50.12280:FF:000002">
    <property type="entry name" value="NADH-quinone oxidoreductase subunit B"/>
    <property type="match status" value="1"/>
</dbReference>
<dbReference type="Gene3D" id="3.40.50.12280">
    <property type="match status" value="1"/>
</dbReference>
<dbReference type="HAMAP" id="MF_01356">
    <property type="entry name" value="NDH1_NuoB"/>
    <property type="match status" value="1"/>
</dbReference>
<dbReference type="InterPro" id="IPR006137">
    <property type="entry name" value="NADH_UbQ_OxRdtase-like_20kDa"/>
</dbReference>
<dbReference type="InterPro" id="IPR006138">
    <property type="entry name" value="NADH_UQ_OxRdtase_20Kd_su"/>
</dbReference>
<dbReference type="NCBIfam" id="TIGR01957">
    <property type="entry name" value="nuoB_fam"/>
    <property type="match status" value="1"/>
</dbReference>
<dbReference type="NCBIfam" id="NF005012">
    <property type="entry name" value="PRK06411.1"/>
    <property type="match status" value="1"/>
</dbReference>
<dbReference type="PANTHER" id="PTHR11995">
    <property type="entry name" value="NADH DEHYDROGENASE"/>
    <property type="match status" value="1"/>
</dbReference>
<dbReference type="PANTHER" id="PTHR11995:SF14">
    <property type="entry name" value="NADH DEHYDROGENASE [UBIQUINONE] IRON-SULFUR PROTEIN 7, MITOCHONDRIAL"/>
    <property type="match status" value="1"/>
</dbReference>
<dbReference type="Pfam" id="PF01058">
    <property type="entry name" value="Oxidored_q6"/>
    <property type="match status" value="1"/>
</dbReference>
<dbReference type="SUPFAM" id="SSF56770">
    <property type="entry name" value="HydA/Nqo6-like"/>
    <property type="match status" value="1"/>
</dbReference>
<protein>
    <recommendedName>
        <fullName evidence="1">NADH-quinone oxidoreductase subunit B</fullName>
        <ecNumber evidence="1">7.1.1.-</ecNumber>
    </recommendedName>
    <alternativeName>
        <fullName evidence="1">NADH dehydrogenase I subunit B</fullName>
    </alternativeName>
    <alternativeName>
        <fullName evidence="1">NDH-1 subunit B</fullName>
    </alternativeName>
</protein>
<comment type="function">
    <text evidence="1">NDH-1 shuttles electrons from NADH, via FMN and iron-sulfur (Fe-S) centers, to quinones in the respiratory chain. The immediate electron acceptor for the enzyme in this species is believed to be a menaquinone. Couples the redox reaction to proton translocation (for every two electrons transferred, four hydrogen ions are translocated across the cytoplasmic membrane), and thus conserves the redox energy in a proton gradient.</text>
</comment>
<comment type="catalytic activity">
    <reaction evidence="1">
        <text>a quinone + NADH + 5 H(+)(in) = a quinol + NAD(+) + 4 H(+)(out)</text>
        <dbReference type="Rhea" id="RHEA:57888"/>
        <dbReference type="ChEBI" id="CHEBI:15378"/>
        <dbReference type="ChEBI" id="CHEBI:24646"/>
        <dbReference type="ChEBI" id="CHEBI:57540"/>
        <dbReference type="ChEBI" id="CHEBI:57945"/>
        <dbReference type="ChEBI" id="CHEBI:132124"/>
    </reaction>
</comment>
<comment type="cofactor">
    <cofactor evidence="1">
        <name>[4Fe-4S] cluster</name>
        <dbReference type="ChEBI" id="CHEBI:49883"/>
    </cofactor>
    <text evidence="1">Binds 1 [4Fe-4S] cluster.</text>
</comment>
<comment type="subunit">
    <text evidence="1">NDH-1 is composed of 14 different subunits. Subunits NuoB, C, D, E, F, and G constitute the peripheral sector of the complex.</text>
</comment>
<comment type="subcellular location">
    <subcellularLocation>
        <location evidence="1">Cell membrane</location>
        <topology evidence="1">Peripheral membrane protein</topology>
        <orientation evidence="1">Cytoplasmic side</orientation>
    </subcellularLocation>
</comment>
<comment type="similarity">
    <text evidence="1">Belongs to the complex I 20 kDa subunit family.</text>
</comment>
<evidence type="ECO:0000255" key="1">
    <source>
        <dbReference type="HAMAP-Rule" id="MF_01356"/>
    </source>
</evidence>
<keyword id="KW-0004">4Fe-4S</keyword>
<keyword id="KW-1003">Cell membrane</keyword>
<keyword id="KW-0408">Iron</keyword>
<keyword id="KW-0411">Iron-sulfur</keyword>
<keyword id="KW-0472">Membrane</keyword>
<keyword id="KW-0479">Metal-binding</keyword>
<keyword id="KW-0520">NAD</keyword>
<keyword id="KW-0874">Quinone</keyword>
<keyword id="KW-1185">Reference proteome</keyword>
<keyword id="KW-1278">Translocase</keyword>
<keyword id="KW-0813">Transport</keyword>
<feature type="chain" id="PRO_0000376165" description="NADH-quinone oxidoreductase subunit B">
    <location>
        <begin position="1"/>
        <end position="166"/>
    </location>
</feature>
<feature type="binding site" evidence="1">
    <location>
        <position position="44"/>
    </location>
    <ligand>
        <name>[4Fe-4S] cluster</name>
        <dbReference type="ChEBI" id="CHEBI:49883"/>
    </ligand>
</feature>
<feature type="binding site" evidence="1">
    <location>
        <position position="45"/>
    </location>
    <ligand>
        <name>[4Fe-4S] cluster</name>
        <dbReference type="ChEBI" id="CHEBI:49883"/>
    </ligand>
</feature>
<feature type="binding site" evidence="1">
    <location>
        <position position="110"/>
    </location>
    <ligand>
        <name>[4Fe-4S] cluster</name>
        <dbReference type="ChEBI" id="CHEBI:49883"/>
    </ligand>
</feature>
<feature type="binding site" evidence="1">
    <location>
        <position position="140"/>
    </location>
    <ligand>
        <name>[4Fe-4S] cluster</name>
        <dbReference type="ChEBI" id="CHEBI:49883"/>
    </ligand>
</feature>
<sequence length="166" mass="18606">MEIKTIQSEEEKLIGKNVFLTTLDAVFNWARGNSLWPLTFGLACCAIEVMAAGGPKYDFSRFGYEVWRPSPRHADLMIVAGTITKKMQPLVLRLYEQMAEPKYVIAMGSCAISGGPFVDSYHVVPGANTFLPVDVYIPGCPPRPEALLYGWLELKRKIQNPRVVKR</sequence>
<accession>Q3AC78</accession>
<gene>
    <name evidence="1" type="primary">nuoB</name>
    <name type="ordered locus">CHY_1424</name>
</gene>
<reference key="1">
    <citation type="journal article" date="2005" name="PLoS Genet.">
        <title>Life in hot carbon monoxide: the complete genome sequence of Carboxydothermus hydrogenoformans Z-2901.</title>
        <authorList>
            <person name="Wu M."/>
            <person name="Ren Q."/>
            <person name="Durkin A.S."/>
            <person name="Daugherty S.C."/>
            <person name="Brinkac L.M."/>
            <person name="Dodson R.J."/>
            <person name="Madupu R."/>
            <person name="Sullivan S.A."/>
            <person name="Kolonay J.F."/>
            <person name="Nelson W.C."/>
            <person name="Tallon L.J."/>
            <person name="Jones K.M."/>
            <person name="Ulrich L.E."/>
            <person name="Gonzalez J.M."/>
            <person name="Zhulin I.B."/>
            <person name="Robb F.T."/>
            <person name="Eisen J.A."/>
        </authorList>
    </citation>
    <scope>NUCLEOTIDE SEQUENCE [LARGE SCALE GENOMIC DNA]</scope>
    <source>
        <strain>ATCC BAA-161 / DSM 6008 / Z-2901</strain>
    </source>
</reference>
<proteinExistence type="inferred from homology"/>